<name>FUSA2_GIBZE</name>
<sequence length="4423" mass="488395">MQGGPVICNGIPSVTISILPHPRSRARTSLLLRRGGALGPGSGCMSDRLFTTPDMRKNRQRLTLAASVVLKKEENEIDLEKSLVEQGGDMLSGVFFAGQCRELGLIVDIANASSMSLRDMALQLVESNPELLRPSTAMDCRSASVPHTLLQSLYRNFGASTGVTLDVDIPLTLEDVTKMLQRLVERHPILGSTAEPNDKTSYVFSNTVPSPILVSFESDKTHAEMRMLQEDSKSKVAVFSVMAFGEESRITNLSFVADNAAIDAQSWSILLHDIQAFPAGFNDLTTQSNTFPNWIESAFRVTDTTVETAGTTKLPIHSEMSAEDSSPALSSCVFTLNPELTQAIQSEACHRTLRTEVQDVMFGALASTFGTQLPASARYLEIKDGRPQDEGNAWNSVIGCFDEIFELAYECHGDIIDACRSAKDSRKQSSLSPVHYASCRYNLILDTTWLKACIGTSSTGKMRLMDNEPGRYAAEALVKSMGGLCMTPFWQGTGLSFLVVSSTDFGSDEDLKLNSEMFINHVQHISETLPNRSPWPTLSDFPHVSFDYPSLDRMFQQKLLQITQTPLADIHNIYPCTSIQENMLMGNSLDKDAYVCSFTARATTSGAFTHFDAAKWAEAWGRVVEKHSSLRTIFIESEGRPGHFEQVILKSVAAPVDIMTGPSVPSKIEFQDFSVPHHLAIIQEGPGRCLMILTMSHAITDGHSAEVLLGDLCAEAVQTDGTGEEAFAYSEFALTEYQSTNTEVSDYWQDYLLKTQETILPVTREKSDFHDFNTVHSTMPVNVSSMDRICRRHNINLASVCQFAWGVVLRSRLGVDGVCFSYISSLRNKPLKGIMTAVGPLITTLLCSMNLEGERPVLDAIRAVDSEYVESLSHEKELYNITSPRRWCNTVMSFRRRLVQDDGGIPGLSYKLVKAFSPTNYDFSLIVSAGQSDLDIMLDYWGSRMDRDNAQSLLQIFQEVLHSIFRDIDSTVSGLDLISQDDKNRILERNRLVPKGLNRCVHELVNERIQKQPSAVAIDAWDGSLTYSELDNLTSRLAQYLSNIGVGPEVPVGICMDKSKLVPVTVLAILQAGGAVLPIGVEEPEARVEAILADATPVAIVGDGRQVTRLSELGTQVLNVVDILADMSSSLPSSTSKQETRATPDTTAWIFYTSGSTGTPKGVLVEHQALATSMRAHGVALKVLPEDRVLQFAAHTFDVSLSELFTTLIFGGCVCIPDETNRVNDLAGSVHGLQANVLSLTSSMASTIRPRDVPMVRKLVLFGEEVKASVVEAWLGKADIYNAYGPTESSIFASVSKPFQSVDDLSNIGYPMDVNFWVTDPQNPGRLCPPGSPGELLIEGPLLARGYLNDDNKTSTAFIQDPSFASLLGLEKGRRFYRTGDLVRQNSDFSMSYLGRRDTQVKIRGQRLDVSEVEHWITASLEGAVRVVVDLLPGAILFAAVEFSPHAVVVVSGDKTILQTSDEFRHRFSQLKNALQGKLPSYMLPTFYVPFRRIPLTSSAKTDRKMVRLLVSQLDTIILQQYISNDSNESDDLPLTETEQKLKVLWANVLNVTHSSIGAGDHFLYRGGDSLMAIKLVEQARLESISMTVKDVLSFPRLQDLARTIDERNEVGIISSAQMANQHDPPAFSLWKPSSSDRETELADIAMQCGLGTEDIEDVYPCTSLQESMLAATQQRPTAYIVRQMYSLSDSIDLSHFRKIWDVLVQQAPVMRTHILLGQRSGSLQVLSKKPLTWYNHDDLDEYVAADQARAMATGQPLMRLALVQDKSKGVRYFVWTAHHSVYDGWSAQLIYKRLAALYLYEEVPTAVPFTRFIEYQQRTKDDSDINLGSYWRGQLGGDVPSAFPSMPSPFYQPKPVSLHRSEIDTLSFKPSKYGFSLADILRAGWAMTLGQYLGTNDVVFGAILSGRNAPVAEITQLIAPTITTVPVRVTVDREAKVSWYLAAIQSQAVEMIPYEHTGLDEIKRLCPDLQPATDVNHAFVIEPPYAKDGDAHTILPGLELVDTALDTFDTFALTIQCQLPSKQGGSIKVEARFDAKVVSDAQVTVLLRQFEHWVSQFLDETHHETQLKSLEEITSADLAQIKKQNSRIPVRDMVCLHHLIRDVAKEQPDSPAVCAWDGDFTYEELWTNARRLAQHLSNLGVGPKSRVAVCMDKSRWTVASILGILESGGVVVMLRSQSPLEQAKALVADCQATAMLVNAGHTARFAGSGPRIVEVNDALLASLPDPTVSGPICPALNPGHPAWIVYTSGSTGLPKGCLLIHGGLATSLPAHGRATRWHKESRTLQFASHEFDVTLQEIMTTLIFKGCVCIPSEDQRINSLSQAIRDMNVTQMVLTPTVASMINPVDVPCIVQLQVAGELIKPSVVERWIDHAEVVNIYGPSECSVYSSCGTPMQTIEDAPVIGYPLDNCNFWVTSTTDHNRLCPIGIPGELLIENSWQAWGYVNNPELTAQCFVVEPGFIKQLGLDGSGRRMYRTGDLVQQNPNGSYTYIGRMGSEVKFRGHRVDLGRIEYWIGKLLEGVQTIAVDLVELDTGKKANDLVAVIDFTDDCDLFDLDQTEDIDGVAILTPSTKIRKALCRLRDGLTDKLPSYMVPTAFMPWKKIPFTSSGKTNRKAIRQLLTNLEAGSSLLQRYLADGDVKEVPQTRIGKKLQQLWAEVLSVKVDSIGSQDHFTRLGGDSLAAMKLVASARQVGLELSVTSIFTYPVLEDCARILEADQDSSLVKLPEEDPAPFELMPEDWSTGGFEDRLADFAAQCRVAPSQIEDVYPCTPMQEALFAITARNPTAYTYRQVFRASGEDVDMVRFQTAWETVASILPILRTRIVLDQSGFLQTVIDQPLIWHIGGDLDSYIAADKLVGFEPGTPLLRCAIVEGGGAKYFVLTTHHSMFDKWSIEKIMYRYLIPAYFGQQLPEAVPFPRFVRHVLNIDMDSASQFWTQKLEDDEPFTEFPSLPSVGFYEPKPTGLLSQTFRIDGVNKLETPFPSLLRAAWALTVSQYAGAEDVMFAVNLSGRSAPVADISELAAPTFTTVPVRVRINRSQRVRDFLDGLHRETIAMVPFEHVGLRNIKRFVPTFNPSDLRHLFLVHTAADDTLDDPSFRLPGFEQVHQKAETLDDYPLTILCKLDDHKGEAEVVARFDSTVIPADQIQSVLRQFEHNVVQLAASASSDDQTVGGLPLVSSYDLDRISAWNVTGPPSLGCVHDLFIRSLETRPDSQAVCSWDGEFTYRELDQAARILAQLLVAEGGVGTEVAVGLCMDKSRWAMVAVLAILYAGGAVVPLGVDLPPERISVILQDSSPTMVLCDEAKADRFRSLGCKIAVVNETEIDGVAKSYDGYNPNIPSTSVSAENMAWIIYTSGSTGVPKGVTLEHGGIYNIILNKGTTLGFDSTTRTFQFAAFTFDVSIADPLMAWAFGGCVCLPSEDERMNDLVGSINRLNANFALLTASTAALITPSEVPRMTKLLLGGESNTPSLMEKWLLDSNITVGNSYGPAECSITSTINARVTDKNGCNIIGNPIQGTQAWIADFHDCNRLVPIGAVGELLIEGPHVARGYRNDAVKTMAAFITDPRFTTDVGPKRHGRRMYRSGDLVRYTSDGNIEFLGRGDSQIKIRGQRVDLGEIESCIVKLVPKVRTALVEYLHLSEDQRALIAALEFHNADKDQDVEGLATWLKESLAQQLPAYMIPRAYLQIDMIPKTVSGKTNRKAIRQFMMNKYMQIADENSLNDFQTGKVDTESEYITRTLWAAVLGVDADRIDRHDNFFDIGGDSIIAMKLVAAAKVKGFQIRVLDIFENPVLFKMAVVAQHQTEMALEAVSPPPYYPFQLLDSDDNDIDTILEEFVCPVTGTGKESIQDVFPAPDAIAFGVAGALTAAQPEVNTFVLDAEGDLDLVRLQQSCVLLAHHIEAFRTAFAFDLRSGRLLQIVLKSYQHNVLVVRTRESLEDATERLFEKDIYHEPFRLGTPLVSMTILQEHNSRNTRILLRMSHAIYDAMSLPIILRTLRSLYHKQDAYKPPLFSFAEYVADLNRHTGNTSYNYWRNLLQGSTMTEVIPTAAYGGQNPVQMAFTNAKMIAVRKSKGDGITTSTIISCAWAHVLAQYTGKPDVVFGDTISGRNLVDPSISSTVVGCCATNVPMRVRFAGDSGEHSILQLLNQVRDQQRSRIPHEGVGVRSLIHECTDWSPEARFTSVVNHRPANDPAVKSISNQIDFKVSTITTENKPFMTWYDLAVISQENNGHVEMSLGYSTTGFHPETAQSLLEDLADTVQILLNAVSSQDEKLALLGTEVMPRSSSKLTKLQRVNSPKEQTLRKDKPTNGVFSDKPDDATLSVLDTIWFSIFTSNRAGVGTLASDELTPDLRYLPFYKVGGDLLDAAWFIALIQRRVKTSGRESNGDGILASHNQLTVDDVLRHPSVVEFAGLLKQKQVELN</sequence>
<organism>
    <name type="scientific">Gibberella zeae (strain ATCC MYA-4620 / CBS 123657 / FGSC 9075 / NRRL 31084 / PH-1)</name>
    <name type="common">Wheat head blight fungus</name>
    <name type="synonym">Fusarium graminearum</name>
    <dbReference type="NCBI Taxonomy" id="229533"/>
    <lineage>
        <taxon>Eukaryota</taxon>
        <taxon>Fungi</taxon>
        <taxon>Dikarya</taxon>
        <taxon>Ascomycota</taxon>
        <taxon>Pezizomycotina</taxon>
        <taxon>Sordariomycetes</taxon>
        <taxon>Hypocreomycetidae</taxon>
        <taxon>Hypocreales</taxon>
        <taxon>Nectriaceae</taxon>
        <taxon>Fusarium</taxon>
    </lineage>
</organism>
<keyword id="KW-0413">Isomerase</keyword>
<keyword id="KW-0436">Ligase</keyword>
<keyword id="KW-0596">Phosphopantetheine</keyword>
<keyword id="KW-0597">Phosphoprotein</keyword>
<keyword id="KW-1185">Reference proteome</keyword>
<keyword id="KW-0677">Repeat</keyword>
<reference key="1">
    <citation type="journal article" date="2007" name="Science">
        <title>The Fusarium graminearum genome reveals a link between localized polymorphism and pathogen specialization.</title>
        <authorList>
            <person name="Cuomo C.A."/>
            <person name="Gueldener U."/>
            <person name="Xu J.-R."/>
            <person name="Trail F."/>
            <person name="Turgeon B.G."/>
            <person name="Di Pietro A."/>
            <person name="Walton J.D."/>
            <person name="Ma L.-J."/>
            <person name="Baker S.E."/>
            <person name="Rep M."/>
            <person name="Adam G."/>
            <person name="Antoniw J."/>
            <person name="Baldwin T."/>
            <person name="Calvo S.E."/>
            <person name="Chang Y.-L."/>
            <person name="DeCaprio D."/>
            <person name="Gale L.R."/>
            <person name="Gnerre S."/>
            <person name="Goswami R.S."/>
            <person name="Hammond-Kosack K."/>
            <person name="Harris L.J."/>
            <person name="Hilburn K."/>
            <person name="Kennell J.C."/>
            <person name="Kroken S."/>
            <person name="Magnuson J.K."/>
            <person name="Mannhaupt G."/>
            <person name="Mauceli E.W."/>
            <person name="Mewes H.-W."/>
            <person name="Mitterbauer R."/>
            <person name="Muehlbauer G."/>
            <person name="Muensterkoetter M."/>
            <person name="Nelson D."/>
            <person name="O'Donnell K."/>
            <person name="Ouellet T."/>
            <person name="Qi W."/>
            <person name="Quesneville H."/>
            <person name="Roncero M.I.G."/>
            <person name="Seong K.-Y."/>
            <person name="Tetko I.V."/>
            <person name="Urban M."/>
            <person name="Waalwijk C."/>
            <person name="Ward T.J."/>
            <person name="Yao J."/>
            <person name="Birren B.W."/>
            <person name="Kistler H.C."/>
        </authorList>
    </citation>
    <scope>NUCLEOTIDE SEQUENCE [LARGE SCALE GENOMIC DNA]</scope>
    <source>
        <strain>ATCC MYA-4620 / CBS 123657 / FGSC 9075 / NRRL 31084 / PH-1</strain>
    </source>
</reference>
<reference key="2">
    <citation type="journal article" date="2010" name="Nature">
        <title>Comparative genomics reveals mobile pathogenicity chromosomes in Fusarium.</title>
        <authorList>
            <person name="Ma L.-J."/>
            <person name="van der Does H.C."/>
            <person name="Borkovich K.A."/>
            <person name="Coleman J.J."/>
            <person name="Daboussi M.-J."/>
            <person name="Di Pietro A."/>
            <person name="Dufresne M."/>
            <person name="Freitag M."/>
            <person name="Grabherr M."/>
            <person name="Henrissat B."/>
            <person name="Houterman P.M."/>
            <person name="Kang S."/>
            <person name="Shim W.-B."/>
            <person name="Woloshuk C."/>
            <person name="Xie X."/>
            <person name="Xu J.-R."/>
            <person name="Antoniw J."/>
            <person name="Baker S.E."/>
            <person name="Bluhm B.H."/>
            <person name="Breakspear A."/>
            <person name="Brown D.W."/>
            <person name="Butchko R.A.E."/>
            <person name="Chapman S."/>
            <person name="Coulson R."/>
            <person name="Coutinho P.M."/>
            <person name="Danchin E.G.J."/>
            <person name="Diener A."/>
            <person name="Gale L.R."/>
            <person name="Gardiner D.M."/>
            <person name="Goff S."/>
            <person name="Hammond-Kosack K.E."/>
            <person name="Hilburn K."/>
            <person name="Hua-Van A."/>
            <person name="Jonkers W."/>
            <person name="Kazan K."/>
            <person name="Kodira C.D."/>
            <person name="Koehrsen M."/>
            <person name="Kumar L."/>
            <person name="Lee Y.-H."/>
            <person name="Li L."/>
            <person name="Manners J.M."/>
            <person name="Miranda-Saavedra D."/>
            <person name="Mukherjee M."/>
            <person name="Park G."/>
            <person name="Park J."/>
            <person name="Park S.-Y."/>
            <person name="Proctor R.H."/>
            <person name="Regev A."/>
            <person name="Ruiz-Roldan M.C."/>
            <person name="Sain D."/>
            <person name="Sakthikumar S."/>
            <person name="Sykes S."/>
            <person name="Schwartz D.C."/>
            <person name="Turgeon B.G."/>
            <person name="Wapinski I."/>
            <person name="Yoder O."/>
            <person name="Young S."/>
            <person name="Zeng Q."/>
            <person name="Zhou S."/>
            <person name="Galagan J."/>
            <person name="Cuomo C.A."/>
            <person name="Kistler H.C."/>
            <person name="Rep M."/>
        </authorList>
    </citation>
    <scope>GENOME REANNOTATION</scope>
    <source>
        <strain>ATCC MYA-4620 / CBS 123657 / FGSC 9075 / NRRL 31084 / PH-1</strain>
    </source>
</reference>
<reference key="3">
    <citation type="journal article" date="2015" name="BMC Genomics">
        <title>The completed genome sequence of the pathogenic ascomycete fungus Fusarium graminearum.</title>
        <authorList>
            <person name="King R."/>
            <person name="Urban M."/>
            <person name="Hammond-Kosack M.C.U."/>
            <person name="Hassani-Pak K."/>
            <person name="Hammond-Kosack K.E."/>
        </authorList>
    </citation>
    <scope>NUCLEOTIDE SEQUENCE [LARGE SCALE GENOMIC DNA]</scope>
    <source>
        <strain>ATCC MYA-4620 / CBS 123657 / FGSC 9075 / NRRL 31084 / PH-1</strain>
    </source>
</reference>
<reference key="4">
    <citation type="journal article" date="2014" name="J. Nat. Prod.">
        <title>Identification of the biosynthetic gene clusters for the lipopeptides fusaristatin A and W493 B in Fusarium graminearum and F. pseudograminearum.</title>
        <authorList>
            <person name="Soerensen J.L."/>
            <person name="Sondergaard T.E."/>
            <person name="Covarelli L."/>
            <person name="Fuertes P.R."/>
            <person name="Hansen F.T."/>
            <person name="Frandsen R.J."/>
            <person name="Saei W."/>
            <person name="Lukassen M.B."/>
            <person name="Wimmer R."/>
            <person name="Nielsen K.F."/>
            <person name="Gardiner D.M."/>
            <person name="Giese H."/>
        </authorList>
    </citation>
    <scope>IDENTIFICATION</scope>
    <scope>FUNCTION</scope>
    <scope>DISRUPTION PHENOTYPE</scope>
    <scope>PATHWAY</scope>
</reference>
<proteinExistence type="inferred from homology"/>
<accession>I1RVD9</accession>
<accession>A0A098DC07</accession>
<gene>
    <name evidence="6" type="primary">NRPS7</name>
    <name type="ORF">FGRAMPH1_01T09373</name>
    <name evidence="6" type="ORF">FGSG_08209</name>
</gene>
<dbReference type="EC" id="6.3.2.-" evidence="8"/>
<dbReference type="EMBL" id="HG970333">
    <property type="protein sequence ID" value="CEF76489.1"/>
    <property type="molecule type" value="Genomic_DNA"/>
</dbReference>
<dbReference type="RefSeq" id="XP_011320598.1">
    <property type="nucleotide sequence ID" value="XM_011322296.1"/>
</dbReference>
<dbReference type="SMR" id="I1RVD9"/>
<dbReference type="STRING" id="229533.I1RVD9"/>
<dbReference type="GeneID" id="23555234"/>
<dbReference type="KEGG" id="fgr:FGSG_08209"/>
<dbReference type="VEuPathDB" id="FungiDB:FGRAMPH1_01G09373"/>
<dbReference type="eggNOG" id="KOG1176">
    <property type="taxonomic scope" value="Eukaryota"/>
</dbReference>
<dbReference type="eggNOG" id="KOG1178">
    <property type="taxonomic scope" value="Eukaryota"/>
</dbReference>
<dbReference type="HOGENOM" id="CLU_000022_60_0_1"/>
<dbReference type="InParanoid" id="I1RVD9"/>
<dbReference type="OrthoDB" id="60510at110618"/>
<dbReference type="Proteomes" id="UP000070720">
    <property type="component" value="Chromosome 2"/>
</dbReference>
<dbReference type="GO" id="GO:0005737">
    <property type="term" value="C:cytoplasm"/>
    <property type="evidence" value="ECO:0007669"/>
    <property type="project" value="TreeGrafter"/>
</dbReference>
<dbReference type="GO" id="GO:0016853">
    <property type="term" value="F:isomerase activity"/>
    <property type="evidence" value="ECO:0007669"/>
    <property type="project" value="UniProtKB-KW"/>
</dbReference>
<dbReference type="GO" id="GO:0016874">
    <property type="term" value="F:ligase activity"/>
    <property type="evidence" value="ECO:0007669"/>
    <property type="project" value="UniProtKB-KW"/>
</dbReference>
<dbReference type="GO" id="GO:0031177">
    <property type="term" value="F:phosphopantetheine binding"/>
    <property type="evidence" value="ECO:0007669"/>
    <property type="project" value="InterPro"/>
</dbReference>
<dbReference type="GO" id="GO:0043041">
    <property type="term" value="P:amino acid activation for nonribosomal peptide biosynthetic process"/>
    <property type="evidence" value="ECO:0007669"/>
    <property type="project" value="TreeGrafter"/>
</dbReference>
<dbReference type="GO" id="GO:0044550">
    <property type="term" value="P:secondary metabolite biosynthetic process"/>
    <property type="evidence" value="ECO:0007669"/>
    <property type="project" value="TreeGrafter"/>
</dbReference>
<dbReference type="CDD" id="cd05918">
    <property type="entry name" value="A_NRPS_SidN3_like"/>
    <property type="match status" value="3"/>
</dbReference>
<dbReference type="CDD" id="cd19542">
    <property type="entry name" value="CT_NRPS-like"/>
    <property type="match status" value="1"/>
</dbReference>
<dbReference type="CDD" id="cd19545">
    <property type="entry name" value="FUM14_C_NRPS-like"/>
    <property type="match status" value="2"/>
</dbReference>
<dbReference type="FunFam" id="3.40.50.980:FF:000001">
    <property type="entry name" value="Non-ribosomal peptide synthetase"/>
    <property type="match status" value="1"/>
</dbReference>
<dbReference type="FunFam" id="3.30.300.30:FF:000015">
    <property type="entry name" value="Nonribosomal peptide synthase SidD"/>
    <property type="match status" value="3"/>
</dbReference>
<dbReference type="FunFam" id="3.30.559.30:FF:000003">
    <property type="entry name" value="Nonribosomal peptide synthase SidD"/>
    <property type="match status" value="1"/>
</dbReference>
<dbReference type="FunFam" id="1.10.1200.10:FF:000005">
    <property type="entry name" value="Nonribosomal peptide synthetase 1"/>
    <property type="match status" value="1"/>
</dbReference>
<dbReference type="FunFam" id="3.40.50.12780:FF:000014">
    <property type="entry name" value="Nonribosomal peptide synthetase 1"/>
    <property type="match status" value="1"/>
</dbReference>
<dbReference type="Gene3D" id="3.30.300.30">
    <property type="match status" value="3"/>
</dbReference>
<dbReference type="Gene3D" id="1.10.1200.10">
    <property type="entry name" value="ACP-like"/>
    <property type="match status" value="3"/>
</dbReference>
<dbReference type="Gene3D" id="3.30.559.10">
    <property type="entry name" value="Chloramphenicol acetyltransferase-like domain"/>
    <property type="match status" value="5"/>
</dbReference>
<dbReference type="Gene3D" id="3.40.50.12780">
    <property type="entry name" value="N-terminal domain of ligase-like"/>
    <property type="match status" value="3"/>
</dbReference>
<dbReference type="Gene3D" id="3.30.559.30">
    <property type="entry name" value="Nonribosomal peptide synthetase, condensation domain"/>
    <property type="match status" value="4"/>
</dbReference>
<dbReference type="InterPro" id="IPR010071">
    <property type="entry name" value="AA_adenyl_dom"/>
</dbReference>
<dbReference type="InterPro" id="IPR036736">
    <property type="entry name" value="ACP-like_sf"/>
</dbReference>
<dbReference type="InterPro" id="IPR045851">
    <property type="entry name" value="AMP-bd_C_sf"/>
</dbReference>
<dbReference type="InterPro" id="IPR020845">
    <property type="entry name" value="AMP-binding_CS"/>
</dbReference>
<dbReference type="InterPro" id="IPR000873">
    <property type="entry name" value="AMP-dep_synth/lig_dom"/>
</dbReference>
<dbReference type="InterPro" id="IPR042099">
    <property type="entry name" value="ANL_N_sf"/>
</dbReference>
<dbReference type="InterPro" id="IPR023213">
    <property type="entry name" value="CAT-like_dom_sf"/>
</dbReference>
<dbReference type="InterPro" id="IPR001242">
    <property type="entry name" value="Condensatn"/>
</dbReference>
<dbReference type="InterPro" id="IPR020806">
    <property type="entry name" value="PKS_PP-bd"/>
</dbReference>
<dbReference type="InterPro" id="IPR009081">
    <property type="entry name" value="PP-bd_ACP"/>
</dbReference>
<dbReference type="InterPro" id="IPR006162">
    <property type="entry name" value="Ppantetheine_attach_site"/>
</dbReference>
<dbReference type="NCBIfam" id="TIGR01733">
    <property type="entry name" value="AA-adenyl-dom"/>
    <property type="match status" value="2"/>
</dbReference>
<dbReference type="NCBIfam" id="NF003417">
    <property type="entry name" value="PRK04813.1"/>
    <property type="match status" value="3"/>
</dbReference>
<dbReference type="PANTHER" id="PTHR45527:SF16">
    <property type="entry name" value="NONRIBOSOMAL PEPTIDE SYNTHASE ATNA-RELATED"/>
    <property type="match status" value="1"/>
</dbReference>
<dbReference type="PANTHER" id="PTHR45527">
    <property type="entry name" value="NONRIBOSOMAL PEPTIDE SYNTHETASE"/>
    <property type="match status" value="1"/>
</dbReference>
<dbReference type="Pfam" id="PF00501">
    <property type="entry name" value="AMP-binding"/>
    <property type="match status" value="3"/>
</dbReference>
<dbReference type="Pfam" id="PF00668">
    <property type="entry name" value="Condensation"/>
    <property type="match status" value="4"/>
</dbReference>
<dbReference type="Pfam" id="PF00550">
    <property type="entry name" value="PP-binding"/>
    <property type="match status" value="3"/>
</dbReference>
<dbReference type="SMART" id="SM00823">
    <property type="entry name" value="PKS_PP"/>
    <property type="match status" value="3"/>
</dbReference>
<dbReference type="SUPFAM" id="SSF56801">
    <property type="entry name" value="Acetyl-CoA synthetase-like"/>
    <property type="match status" value="3"/>
</dbReference>
<dbReference type="SUPFAM" id="SSF47336">
    <property type="entry name" value="ACP-like"/>
    <property type="match status" value="3"/>
</dbReference>
<dbReference type="SUPFAM" id="SSF52777">
    <property type="entry name" value="CoA-dependent acyltransferases"/>
    <property type="match status" value="9"/>
</dbReference>
<dbReference type="PROSITE" id="PS00455">
    <property type="entry name" value="AMP_BINDING"/>
    <property type="match status" value="3"/>
</dbReference>
<dbReference type="PROSITE" id="PS50075">
    <property type="entry name" value="CARRIER"/>
    <property type="match status" value="3"/>
</dbReference>
<dbReference type="PROSITE" id="PS00012">
    <property type="entry name" value="PHOSPHOPANTETHEINE"/>
    <property type="match status" value="2"/>
</dbReference>
<comment type="function">
    <text evidence="5 8">Nonribosomal peptide synthetase; part of the gene cluster that mediates the biosynthesis of the lipopeptide fusaristatin A (PubMed:25412204). Fusaristatin A consists of a polyketide chain linked to three amino acid residues glutamine (Gln), dehydroalanine (dehydro-Ala), and beta-aminoisobutyric acid (PubMed:25412204). The biosynthesis starts with formation of a linear polyketide chain by the highly reducing polyketide synthase PKS6 (PubMed:25412204). The gene cluster does not contain an acyl-CoA ligase or an acyl-transferase, and it is therefore predicted that the polyketide is transferred directly to the nonribosomal peptide synthetase NRPS7 (Probable). Modules 1-3 from NRPS7 incorporate dehydro-Ala, Gln, and beta-aminoisobutyric acid in the compound, which is released by cyclization (PubMed:25412204). The beta-aminoisobutyric acid units are most likely not freely available to the NRPS, but can be synthesized from thymine, which requires a dehydrogenase, a monooxygenase, and an aminotransferase. The fusaristatin A cluster contains a cytochrome P450 monooxygenase (FGSG_08207) and an aminotransferase (FGSG_17085), which theoretically can perform two of the enzymatic steps (Probable). The enzymes may however also be involved in biosynthesis of dehydroalanine or modification of the polyketide (Probable). The dehydro-Ala residue can be a result of cyclization, where serine is dehydrated (Probable). The last gene of the cluster encodes a protein with an A/B barrel domain found in variable enzymes, which hampers functional prediction (Probable).</text>
</comment>
<comment type="pathway">
    <text evidence="5">Secondary metabolite biosynthesis.</text>
</comment>
<comment type="domain">
    <text evidence="1 8">NRP synthetases are composed of discrete domains (adenylation (A), thiolation (T) or peptidyl carrier protein (PCP) and condensation (C) domains) which when grouped together are referred to as a single module. Each module is responsible for the recognition (via the A domain) and incorporation of a single amino acid into the growing peptide product. Thus, an NRP synthetase is generally composed of one or more modules and can terminate in a thioesterase domain (TE) that releases the newly synthesized peptide from the enzyme. Occasionally, epimerase (E) domains (responsible for L- to D-amino acid conversion) are present within the NRP synthetase (By similarity). NRPS7 has the following architecture: C-A-T-C-A-T-C-A-T-Cy. The last condensation domain (Cy) could be responsible for cyclization of the final product (Probable).</text>
</comment>
<comment type="disruption phenotype">
    <text evidence="5">impairs the production of fusaristatin A.</text>
</comment>
<comment type="similarity">
    <text evidence="7">Belongs to the NRP synthetase family.</text>
</comment>
<feature type="chain" id="PRO_0000445374" description="Nonribosomal peptide synthetase 7">
    <location>
        <begin position="1"/>
        <end position="4423"/>
    </location>
</feature>
<feature type="domain" description="Carrier 1" evidence="3">
    <location>
        <begin position="1533"/>
        <end position="1609"/>
    </location>
</feature>
<feature type="domain" description="Carrier 2" evidence="3">
    <location>
        <begin position="2642"/>
        <end position="2718"/>
    </location>
</feature>
<feature type="domain" description="Carrier 3" evidence="3">
    <location>
        <begin position="3731"/>
        <end position="3804"/>
    </location>
</feature>
<feature type="region of interest" description="Condensation 1" evidence="2 8">
    <location>
        <begin position="572"/>
        <end position="986"/>
    </location>
</feature>
<feature type="region of interest" description="Adenylation 1" evidence="2 5">
    <location>
        <begin position="1007"/>
        <end position="1404"/>
    </location>
</feature>
<feature type="region of interest" description="Condensation 2" evidence="2 8">
    <location>
        <begin position="1657"/>
        <end position="2066"/>
    </location>
</feature>
<feature type="region of interest" description="Adenylation 2" evidence="2 5">
    <location>
        <begin position="2102"/>
        <end position="2499"/>
    </location>
</feature>
<feature type="region of interest" description="Condensation 3" evidence="2 8">
    <location>
        <begin position="2764"/>
        <end position="3170"/>
    </location>
</feature>
<feature type="region of interest" description="Adenylation 3" evidence="2 5">
    <location>
        <begin position="3205"/>
        <end position="3609"/>
    </location>
</feature>
<feature type="region of interest" description="Condensation 4" evidence="2 8">
    <location>
        <begin position="3875"/>
        <end position="4278"/>
    </location>
</feature>
<feature type="region of interest" description="Disordered" evidence="4">
    <location>
        <begin position="4288"/>
        <end position="4312"/>
    </location>
</feature>
<feature type="compositionally biased region" description="Polar residues" evidence="4">
    <location>
        <begin position="4288"/>
        <end position="4300"/>
    </location>
</feature>
<feature type="modified residue" description="O-(pantetheine 4'-phosphoryl)serine" evidence="3">
    <location>
        <position position="1570"/>
    </location>
</feature>
<feature type="modified residue" description="O-(pantetheine 4'-phosphoryl)serine" evidence="3">
    <location>
        <position position="2679"/>
    </location>
</feature>
<feature type="modified residue" description="O-(pantetheine 4'-phosphoryl)serine" evidence="3">
    <location>
        <position position="3765"/>
    </location>
</feature>
<evidence type="ECO:0000250" key="1">
    <source>
        <dbReference type="UniProtKB" id="Q4WAZ9"/>
    </source>
</evidence>
<evidence type="ECO:0000255" key="2"/>
<evidence type="ECO:0000255" key="3">
    <source>
        <dbReference type="PROSITE-ProRule" id="PRU00258"/>
    </source>
</evidence>
<evidence type="ECO:0000256" key="4">
    <source>
        <dbReference type="SAM" id="MobiDB-lite"/>
    </source>
</evidence>
<evidence type="ECO:0000269" key="5">
    <source>
    </source>
</evidence>
<evidence type="ECO:0000303" key="6">
    <source>
    </source>
</evidence>
<evidence type="ECO:0000305" key="7"/>
<evidence type="ECO:0000305" key="8">
    <source>
    </source>
</evidence>
<protein>
    <recommendedName>
        <fullName evidence="6">Nonribosomal peptide synthetase 7</fullName>
        <shortName evidence="6">NRPS 7</shortName>
        <ecNumber evidence="8">6.3.2.-</ecNumber>
    </recommendedName>
    <alternativeName>
        <fullName evidence="6">Fusaristatin A biosynthesis cluster protein NRPS7</fullName>
    </alternativeName>
</protein>